<organism>
    <name type="scientific">Orientia tsutsugamushi (strain Ikeda)</name>
    <name type="common">Rickettsia tsutsugamushi</name>
    <dbReference type="NCBI Taxonomy" id="334380"/>
    <lineage>
        <taxon>Bacteria</taxon>
        <taxon>Pseudomonadati</taxon>
        <taxon>Pseudomonadota</taxon>
        <taxon>Alphaproteobacteria</taxon>
        <taxon>Rickettsiales</taxon>
        <taxon>Rickettsiaceae</taxon>
        <taxon>Rickettsieae</taxon>
        <taxon>Orientia</taxon>
    </lineage>
</organism>
<keyword id="KW-0030">Aminoacyl-tRNA synthetase</keyword>
<keyword id="KW-0067">ATP-binding</keyword>
<keyword id="KW-0963">Cytoplasm</keyword>
<keyword id="KW-0436">Ligase</keyword>
<keyword id="KW-0547">Nucleotide-binding</keyword>
<keyword id="KW-0648">Protein biosynthesis</keyword>
<comment type="catalytic activity">
    <reaction evidence="1">
        <text>tRNA(Arg) + L-arginine + ATP = L-arginyl-tRNA(Arg) + AMP + diphosphate</text>
        <dbReference type="Rhea" id="RHEA:20301"/>
        <dbReference type="Rhea" id="RHEA-COMP:9658"/>
        <dbReference type="Rhea" id="RHEA-COMP:9673"/>
        <dbReference type="ChEBI" id="CHEBI:30616"/>
        <dbReference type="ChEBI" id="CHEBI:32682"/>
        <dbReference type="ChEBI" id="CHEBI:33019"/>
        <dbReference type="ChEBI" id="CHEBI:78442"/>
        <dbReference type="ChEBI" id="CHEBI:78513"/>
        <dbReference type="ChEBI" id="CHEBI:456215"/>
        <dbReference type="EC" id="6.1.1.19"/>
    </reaction>
</comment>
<comment type="subunit">
    <text evidence="1">Monomer.</text>
</comment>
<comment type="subcellular location">
    <subcellularLocation>
        <location evidence="1">Cytoplasm</location>
    </subcellularLocation>
</comment>
<comment type="similarity">
    <text evidence="1">Belongs to the class-I aminoacyl-tRNA synthetase family.</text>
</comment>
<accession>B3CST6</accession>
<protein>
    <recommendedName>
        <fullName evidence="1">Arginine--tRNA ligase</fullName>
        <ecNumber evidence="1">6.1.1.19</ecNumber>
    </recommendedName>
    <alternativeName>
        <fullName evidence="1">Arginyl-tRNA synthetase</fullName>
        <shortName evidence="1">ArgRS</shortName>
    </alternativeName>
</protein>
<proteinExistence type="inferred from homology"/>
<feature type="chain" id="PRO_1000095386" description="Arginine--tRNA ligase">
    <location>
        <begin position="1"/>
        <end position="590"/>
    </location>
</feature>
<feature type="short sequence motif" description="'HIGH' region">
    <location>
        <begin position="138"/>
        <end position="148"/>
    </location>
</feature>
<name>SYR_ORITI</name>
<reference key="1">
    <citation type="journal article" date="2008" name="DNA Res.">
        <title>The whole-genome sequencing of the obligate intracellular bacterium Orientia tsutsugamushi revealed massive gene amplification during reductive genome evolution.</title>
        <authorList>
            <person name="Nakayama K."/>
            <person name="Yamashita A."/>
            <person name="Kurokawa K."/>
            <person name="Morimoto T."/>
            <person name="Ogawa M."/>
            <person name="Fukuhara M."/>
            <person name="Urakami H."/>
            <person name="Ohnishi M."/>
            <person name="Uchiyama I."/>
            <person name="Ogura Y."/>
            <person name="Ooka T."/>
            <person name="Oshima K."/>
            <person name="Tamura A."/>
            <person name="Hattori M."/>
            <person name="Hayashi T."/>
        </authorList>
    </citation>
    <scope>NUCLEOTIDE SEQUENCE [LARGE SCALE GENOMIC DNA]</scope>
    <source>
        <strain>Ikeda</strain>
    </source>
</reference>
<evidence type="ECO:0000255" key="1">
    <source>
        <dbReference type="HAMAP-Rule" id="MF_00123"/>
    </source>
</evidence>
<sequence>MNIYKRLKQDIDVVATSIINKLKSTSDSKKFDSLNDTIPIVLESSKDVNSYDISTNIAMLIAKKMNQNSITLANLFKKKLSHYPYIANITIAGPGFINFVILQEAWTNYLAIILDGSYRKEYSSIGNNKKVNIEYVSANPTGPLHIGHARAAVYGDVLATLLQCTGYQVTREYYVNDTGVQIDNLSKSVYLRYKQAITGQAADIPKGLYPGEYLISVGTNLAEEYGDKLLTLSEPEYLNIIKDVAVNNLLQSIKADLALIGVRHDVFFSEKKLHDSNVISKVIDLLSVKKLVYTGKLSQPKGQSSDNWQPRSQLLFKSTIFGDDQDRPLQKEDGSWSYFASDIAYADNKIKRGFDYVIFILGADHIGYVSRIKAIIQALDSNQDVTLDIKICQLVKLIEDGVAVKMSKRSGSFTTIRDVYETVGKDVIRFFMLTRKNNAVLDFDLVKLQEQSRDNPVFYVQYAYVRAGSILRKAKDNANIAYEIFSTNKSDFSLLSTKEELNLIKILAVWSHMLDGAVKNFEPHRIAIYLQKLAAEFHALWNLKSRDLDYRFIVLNDNNLTAARLALATAVREIIREGLKIIGITCVEVM</sequence>
<dbReference type="EC" id="6.1.1.19" evidence="1"/>
<dbReference type="EMBL" id="AP008981">
    <property type="protein sequence ID" value="BAG40433.1"/>
    <property type="molecule type" value="Genomic_DNA"/>
</dbReference>
<dbReference type="RefSeq" id="WP_012461558.1">
    <property type="nucleotide sequence ID" value="NC_010793.1"/>
</dbReference>
<dbReference type="SMR" id="B3CST6"/>
<dbReference type="KEGG" id="ott:OTT_0975"/>
<dbReference type="HOGENOM" id="CLU_006406_0_1_5"/>
<dbReference type="OrthoDB" id="9803211at2"/>
<dbReference type="Proteomes" id="UP000001033">
    <property type="component" value="Chromosome"/>
</dbReference>
<dbReference type="GO" id="GO:0005737">
    <property type="term" value="C:cytoplasm"/>
    <property type="evidence" value="ECO:0007669"/>
    <property type="project" value="UniProtKB-SubCell"/>
</dbReference>
<dbReference type="GO" id="GO:0004814">
    <property type="term" value="F:arginine-tRNA ligase activity"/>
    <property type="evidence" value="ECO:0007669"/>
    <property type="project" value="UniProtKB-UniRule"/>
</dbReference>
<dbReference type="GO" id="GO:0005524">
    <property type="term" value="F:ATP binding"/>
    <property type="evidence" value="ECO:0007669"/>
    <property type="project" value="UniProtKB-UniRule"/>
</dbReference>
<dbReference type="GO" id="GO:0006420">
    <property type="term" value="P:arginyl-tRNA aminoacylation"/>
    <property type="evidence" value="ECO:0007669"/>
    <property type="project" value="UniProtKB-UniRule"/>
</dbReference>
<dbReference type="CDD" id="cd00671">
    <property type="entry name" value="ArgRS_core"/>
    <property type="match status" value="1"/>
</dbReference>
<dbReference type="Gene3D" id="3.30.1360.70">
    <property type="entry name" value="Arginyl tRNA synthetase N-terminal domain"/>
    <property type="match status" value="1"/>
</dbReference>
<dbReference type="Gene3D" id="3.40.50.620">
    <property type="entry name" value="HUPs"/>
    <property type="match status" value="1"/>
</dbReference>
<dbReference type="Gene3D" id="1.10.730.10">
    <property type="entry name" value="Isoleucyl-tRNA Synthetase, Domain 1"/>
    <property type="match status" value="1"/>
</dbReference>
<dbReference type="HAMAP" id="MF_00123">
    <property type="entry name" value="Arg_tRNA_synth"/>
    <property type="match status" value="1"/>
</dbReference>
<dbReference type="InterPro" id="IPR001412">
    <property type="entry name" value="aa-tRNA-synth_I_CS"/>
</dbReference>
<dbReference type="InterPro" id="IPR001278">
    <property type="entry name" value="Arg-tRNA-ligase"/>
</dbReference>
<dbReference type="InterPro" id="IPR005148">
    <property type="entry name" value="Arg-tRNA-synth_N"/>
</dbReference>
<dbReference type="InterPro" id="IPR036695">
    <property type="entry name" value="Arg-tRNA-synth_N_sf"/>
</dbReference>
<dbReference type="InterPro" id="IPR035684">
    <property type="entry name" value="ArgRS_core"/>
</dbReference>
<dbReference type="InterPro" id="IPR008909">
    <property type="entry name" value="DALR_anticod-bd"/>
</dbReference>
<dbReference type="InterPro" id="IPR014729">
    <property type="entry name" value="Rossmann-like_a/b/a_fold"/>
</dbReference>
<dbReference type="InterPro" id="IPR009080">
    <property type="entry name" value="tRNAsynth_Ia_anticodon-bd"/>
</dbReference>
<dbReference type="NCBIfam" id="TIGR00456">
    <property type="entry name" value="argS"/>
    <property type="match status" value="1"/>
</dbReference>
<dbReference type="PANTHER" id="PTHR11956:SF5">
    <property type="entry name" value="ARGININE--TRNA LIGASE, CYTOPLASMIC"/>
    <property type="match status" value="1"/>
</dbReference>
<dbReference type="PANTHER" id="PTHR11956">
    <property type="entry name" value="ARGINYL-TRNA SYNTHETASE"/>
    <property type="match status" value="1"/>
</dbReference>
<dbReference type="Pfam" id="PF03485">
    <property type="entry name" value="Arg_tRNA_synt_N"/>
    <property type="match status" value="1"/>
</dbReference>
<dbReference type="Pfam" id="PF05746">
    <property type="entry name" value="DALR_1"/>
    <property type="match status" value="1"/>
</dbReference>
<dbReference type="Pfam" id="PF00750">
    <property type="entry name" value="tRNA-synt_1d"/>
    <property type="match status" value="1"/>
</dbReference>
<dbReference type="PRINTS" id="PR01038">
    <property type="entry name" value="TRNASYNTHARG"/>
</dbReference>
<dbReference type="SMART" id="SM01016">
    <property type="entry name" value="Arg_tRNA_synt_N"/>
    <property type="match status" value="1"/>
</dbReference>
<dbReference type="SMART" id="SM00836">
    <property type="entry name" value="DALR_1"/>
    <property type="match status" value="1"/>
</dbReference>
<dbReference type="SUPFAM" id="SSF47323">
    <property type="entry name" value="Anticodon-binding domain of a subclass of class I aminoacyl-tRNA synthetases"/>
    <property type="match status" value="1"/>
</dbReference>
<dbReference type="SUPFAM" id="SSF55190">
    <property type="entry name" value="Arginyl-tRNA synthetase (ArgRS), N-terminal 'additional' domain"/>
    <property type="match status" value="1"/>
</dbReference>
<dbReference type="SUPFAM" id="SSF52374">
    <property type="entry name" value="Nucleotidylyl transferase"/>
    <property type="match status" value="1"/>
</dbReference>
<dbReference type="PROSITE" id="PS00178">
    <property type="entry name" value="AA_TRNA_LIGASE_I"/>
    <property type="match status" value="1"/>
</dbReference>
<gene>
    <name evidence="1" type="primary">argS</name>
    <name type="ordered locus">OTT_0975</name>
</gene>